<evidence type="ECO:0000250" key="1">
    <source>
        <dbReference type="UniProtKB" id="P50389"/>
    </source>
</evidence>
<evidence type="ECO:0000255" key="2">
    <source>
        <dbReference type="HAMAP-Rule" id="MF_01627"/>
    </source>
</evidence>
<dbReference type="EC" id="2.4.2.1" evidence="2"/>
<dbReference type="EMBL" id="AE016827">
    <property type="protein sequence ID" value="AAU38506.1"/>
    <property type="molecule type" value="Genomic_DNA"/>
</dbReference>
<dbReference type="RefSeq" id="WP_011201059.1">
    <property type="nucleotide sequence ID" value="NC_006300.1"/>
</dbReference>
<dbReference type="SMR" id="Q65RA4"/>
<dbReference type="STRING" id="221988.MS1899"/>
<dbReference type="KEGG" id="msu:MS1899"/>
<dbReference type="eggNOG" id="COG0813">
    <property type="taxonomic scope" value="Bacteria"/>
</dbReference>
<dbReference type="HOGENOM" id="CLU_068457_2_0_6"/>
<dbReference type="OrthoDB" id="9782889at2"/>
<dbReference type="Proteomes" id="UP000000607">
    <property type="component" value="Chromosome"/>
</dbReference>
<dbReference type="GO" id="GO:0005829">
    <property type="term" value="C:cytosol"/>
    <property type="evidence" value="ECO:0007669"/>
    <property type="project" value="TreeGrafter"/>
</dbReference>
<dbReference type="GO" id="GO:0004731">
    <property type="term" value="F:purine-nucleoside phosphorylase activity"/>
    <property type="evidence" value="ECO:0007669"/>
    <property type="project" value="UniProtKB-UniRule"/>
</dbReference>
<dbReference type="GO" id="GO:0006152">
    <property type="term" value="P:purine nucleoside catabolic process"/>
    <property type="evidence" value="ECO:0007669"/>
    <property type="project" value="TreeGrafter"/>
</dbReference>
<dbReference type="CDD" id="cd09006">
    <property type="entry name" value="PNP_EcPNPI-like"/>
    <property type="match status" value="1"/>
</dbReference>
<dbReference type="FunFam" id="3.40.50.1580:FF:000002">
    <property type="entry name" value="Purine nucleoside phosphorylase DeoD-type"/>
    <property type="match status" value="1"/>
</dbReference>
<dbReference type="Gene3D" id="3.40.50.1580">
    <property type="entry name" value="Nucleoside phosphorylase domain"/>
    <property type="match status" value="1"/>
</dbReference>
<dbReference type="HAMAP" id="MF_01627">
    <property type="entry name" value="Pur_nucleosid_phosp"/>
    <property type="match status" value="1"/>
</dbReference>
<dbReference type="InterPro" id="IPR004402">
    <property type="entry name" value="DeoD-type"/>
</dbReference>
<dbReference type="InterPro" id="IPR018016">
    <property type="entry name" value="Nucleoside_phosphorylase_CS"/>
</dbReference>
<dbReference type="InterPro" id="IPR000845">
    <property type="entry name" value="Nucleoside_phosphorylase_d"/>
</dbReference>
<dbReference type="InterPro" id="IPR035994">
    <property type="entry name" value="Nucleoside_phosphorylase_sf"/>
</dbReference>
<dbReference type="NCBIfam" id="TIGR00107">
    <property type="entry name" value="deoD"/>
    <property type="match status" value="1"/>
</dbReference>
<dbReference type="NCBIfam" id="NF004489">
    <property type="entry name" value="PRK05819.1"/>
    <property type="match status" value="1"/>
</dbReference>
<dbReference type="NCBIfam" id="NF009914">
    <property type="entry name" value="PRK13374.1"/>
    <property type="match status" value="1"/>
</dbReference>
<dbReference type="PANTHER" id="PTHR43691:SF2">
    <property type="entry name" value="PURINE NUCLEOSIDE PHOSPHORYLASE DEOD-TYPE"/>
    <property type="match status" value="1"/>
</dbReference>
<dbReference type="PANTHER" id="PTHR43691">
    <property type="entry name" value="URIDINE PHOSPHORYLASE"/>
    <property type="match status" value="1"/>
</dbReference>
<dbReference type="Pfam" id="PF01048">
    <property type="entry name" value="PNP_UDP_1"/>
    <property type="match status" value="1"/>
</dbReference>
<dbReference type="SUPFAM" id="SSF53167">
    <property type="entry name" value="Purine and uridine phosphorylases"/>
    <property type="match status" value="1"/>
</dbReference>
<dbReference type="PROSITE" id="PS01232">
    <property type="entry name" value="PNP_UDP_1"/>
    <property type="match status" value="1"/>
</dbReference>
<keyword id="KW-0328">Glycosyltransferase</keyword>
<keyword id="KW-0808">Transferase</keyword>
<name>DEOD_MANSM</name>
<reference key="1">
    <citation type="journal article" date="2004" name="Nat. Biotechnol.">
        <title>The genome sequence of the capnophilic rumen bacterium Mannheimia succiniciproducens.</title>
        <authorList>
            <person name="Hong S.H."/>
            <person name="Kim J.S."/>
            <person name="Lee S.Y."/>
            <person name="In Y.H."/>
            <person name="Choi S.S."/>
            <person name="Rih J.-K."/>
            <person name="Kim C.H."/>
            <person name="Jeong H."/>
            <person name="Hur C.G."/>
            <person name="Kim J.J."/>
        </authorList>
    </citation>
    <scope>NUCLEOTIDE SEQUENCE [LARGE SCALE GENOMIC DNA]</scope>
    <source>
        <strain>KCTC 0769BP / MBEL55E</strain>
    </source>
</reference>
<sequence length="238" mass="25841">MTPHINAPEGAFADVVLMPGDPLRAKYIAETFLENAKEVTNVRNMLGYTGTYKGRPVSVMGHGMGIPSCSIYTKELITEYGVKKIIRVGSCGAVRNDVKVRDVIIGLGACTDSKVNRIRFKDNDFAAIADFDMTQAAVQAAKAKGINYRVGNLFSADLFYTPDVEMFDVMEKYGILGVEMEAAGIYGVAAEFGAKALSICTVSDHIRTGEQTSSEERQLTFNDMIEIALESVLLGDQA</sequence>
<proteinExistence type="inferred from homology"/>
<protein>
    <recommendedName>
        <fullName evidence="2">Purine nucleoside phosphorylase DeoD-type</fullName>
        <shortName evidence="2">PNP</shortName>
        <ecNumber evidence="2">2.4.2.1</ecNumber>
    </recommendedName>
</protein>
<organism>
    <name type="scientific">Mannheimia succiniciproducens (strain KCTC 0769BP / MBEL55E)</name>
    <dbReference type="NCBI Taxonomy" id="221988"/>
    <lineage>
        <taxon>Bacteria</taxon>
        <taxon>Pseudomonadati</taxon>
        <taxon>Pseudomonadota</taxon>
        <taxon>Gammaproteobacteria</taxon>
        <taxon>Pasteurellales</taxon>
        <taxon>Pasteurellaceae</taxon>
        <taxon>Basfia</taxon>
    </lineage>
</organism>
<gene>
    <name evidence="2" type="primary">deoD</name>
    <name type="ordered locus">MS1899</name>
</gene>
<comment type="function">
    <text evidence="2">Catalyzes the reversible phosphorolytic breakdown of the N-glycosidic bond in the beta-(deoxy)ribonucleoside molecules, with the formation of the corresponding free purine bases and pentose-1-phosphate.</text>
</comment>
<comment type="catalytic activity">
    <reaction evidence="2">
        <text>a purine D-ribonucleoside + phosphate = a purine nucleobase + alpha-D-ribose 1-phosphate</text>
        <dbReference type="Rhea" id="RHEA:19805"/>
        <dbReference type="ChEBI" id="CHEBI:26386"/>
        <dbReference type="ChEBI" id="CHEBI:43474"/>
        <dbReference type="ChEBI" id="CHEBI:57720"/>
        <dbReference type="ChEBI" id="CHEBI:142355"/>
        <dbReference type="EC" id="2.4.2.1"/>
    </reaction>
</comment>
<comment type="catalytic activity">
    <reaction evidence="2">
        <text>a purine 2'-deoxy-D-ribonucleoside + phosphate = a purine nucleobase + 2-deoxy-alpha-D-ribose 1-phosphate</text>
        <dbReference type="Rhea" id="RHEA:36431"/>
        <dbReference type="ChEBI" id="CHEBI:26386"/>
        <dbReference type="ChEBI" id="CHEBI:43474"/>
        <dbReference type="ChEBI" id="CHEBI:57259"/>
        <dbReference type="ChEBI" id="CHEBI:142361"/>
        <dbReference type="EC" id="2.4.2.1"/>
    </reaction>
</comment>
<comment type="subunit">
    <text evidence="2">Homohexamer; trimer of homodimers.</text>
</comment>
<comment type="similarity">
    <text evidence="2">Belongs to the PNP/UDP phosphorylase family.</text>
</comment>
<feature type="chain" id="PRO_0000063145" description="Purine nucleoside phosphorylase DeoD-type">
    <location>
        <begin position="1"/>
        <end position="238"/>
    </location>
</feature>
<feature type="active site" description="Proton donor" evidence="2">
    <location>
        <position position="204"/>
    </location>
</feature>
<feature type="binding site" evidence="1">
    <location>
        <position position="4"/>
    </location>
    <ligand>
        <name>a purine D-ribonucleoside</name>
        <dbReference type="ChEBI" id="CHEBI:142355"/>
        <note>ligand shared between dimeric partners</note>
    </ligand>
</feature>
<feature type="binding site" description="in other chain" evidence="1">
    <location>
        <position position="20"/>
    </location>
    <ligand>
        <name>phosphate</name>
        <dbReference type="ChEBI" id="CHEBI:43474"/>
        <note>ligand shared between dimeric partners</note>
    </ligand>
</feature>
<feature type="binding site" description="in other chain" evidence="1">
    <location>
        <position position="24"/>
    </location>
    <ligand>
        <name>phosphate</name>
        <dbReference type="ChEBI" id="CHEBI:43474"/>
        <note>ligand shared between dimeric partners</note>
    </ligand>
</feature>
<feature type="binding site" evidence="1">
    <location>
        <position position="43"/>
    </location>
    <ligand>
        <name>phosphate</name>
        <dbReference type="ChEBI" id="CHEBI:43474"/>
        <note>ligand shared between dimeric partners</note>
    </ligand>
</feature>
<feature type="binding site" description="in other chain" evidence="1">
    <location>
        <begin position="87"/>
        <end position="90"/>
    </location>
    <ligand>
        <name>phosphate</name>
        <dbReference type="ChEBI" id="CHEBI:43474"/>
        <note>ligand shared between dimeric partners</note>
    </ligand>
</feature>
<feature type="binding site" description="in other chain" evidence="1">
    <location>
        <begin position="179"/>
        <end position="181"/>
    </location>
    <ligand>
        <name>a purine D-ribonucleoside</name>
        <dbReference type="ChEBI" id="CHEBI:142355"/>
        <note>ligand shared between dimeric partners</note>
    </ligand>
</feature>
<feature type="binding site" description="in other chain" evidence="1">
    <location>
        <begin position="203"/>
        <end position="204"/>
    </location>
    <ligand>
        <name>a purine D-ribonucleoside</name>
        <dbReference type="ChEBI" id="CHEBI:142355"/>
        <note>ligand shared between dimeric partners</note>
    </ligand>
</feature>
<feature type="site" description="Important for catalytic activity" evidence="2">
    <location>
        <position position="217"/>
    </location>
</feature>
<accession>Q65RA4</accession>